<evidence type="ECO:0000255" key="1">
    <source>
        <dbReference type="HAMAP-Rule" id="MF_01487"/>
    </source>
</evidence>
<comment type="function">
    <text evidence="1">A helicase/nuclease that prepares dsDNA breaks (DSB) for recombinational DNA repair. Binds to DSBs and unwinds DNA via a highly rapid and processive ATP-dependent bidirectional helicase activity. Unwinds dsDNA until it encounters a Chi (crossover hotspot instigator) sequence from the 3' direction. Cuts ssDNA a few nucleotides 3' to the Chi site. The properties and activities of the enzyme are changed at Chi. The Chi-altered holoenzyme produces a long 3'-ssDNA overhang and facilitates RecA-binding to the ssDNA for homologous DNA recombination and repair. Holoenzyme degrades any linearized DNA that is unable to undergo homologous recombination. In the holoenzyme this subunit has ssDNA-dependent ATPase and 5'-3' helicase activity. When added to pre-assembled RecBC greatly stimulates nuclease activity and augments holoenzyme processivity. Negatively regulates the RecA-loading ability of RecBCD.</text>
</comment>
<comment type="catalytic activity">
    <reaction evidence="1">
        <text>Couples ATP hydrolysis with the unwinding of duplex DNA at the replication fork by translocating in the 5'-3' direction. This creates two antiparallel DNA single strands (ssDNA). The leading ssDNA polymer is the template for DNA polymerase III holoenzyme which synthesizes a continuous strand.</text>
        <dbReference type="EC" id="5.6.2.3"/>
    </reaction>
</comment>
<comment type="catalytic activity">
    <reaction evidence="1">
        <text>ATP + H2O = ADP + phosphate + H(+)</text>
        <dbReference type="Rhea" id="RHEA:13065"/>
        <dbReference type="ChEBI" id="CHEBI:15377"/>
        <dbReference type="ChEBI" id="CHEBI:15378"/>
        <dbReference type="ChEBI" id="CHEBI:30616"/>
        <dbReference type="ChEBI" id="CHEBI:43474"/>
        <dbReference type="ChEBI" id="CHEBI:456216"/>
        <dbReference type="EC" id="5.6.2.3"/>
    </reaction>
</comment>
<comment type="subunit">
    <text evidence="1">Heterotrimer of RecB, RecC and RecD. All subunits contribute to DNA-binding.</text>
</comment>
<comment type="miscellaneous">
    <text evidence="1">In the RecBCD complex, RecB has a slow 3'-5' helicase, an exonuclease activity and loads RecA onto ssDNA, RecD has a fast 5'-3' helicase activity, while RecC stimulates the ATPase and processivity of the RecB helicase and contributes to recognition of the Chi site.</text>
</comment>
<comment type="similarity">
    <text evidence="1">Belongs to the RecD family.</text>
</comment>
<reference key="1">
    <citation type="journal article" date="1995" name="Science">
        <title>Whole-genome random sequencing and assembly of Haemophilus influenzae Rd.</title>
        <authorList>
            <person name="Fleischmann R.D."/>
            <person name="Adams M.D."/>
            <person name="White O."/>
            <person name="Clayton R.A."/>
            <person name="Kirkness E.F."/>
            <person name="Kerlavage A.R."/>
            <person name="Bult C.J."/>
            <person name="Tomb J.-F."/>
            <person name="Dougherty B.A."/>
            <person name="Merrick J.M."/>
            <person name="McKenney K."/>
            <person name="Sutton G.G."/>
            <person name="FitzHugh W."/>
            <person name="Fields C.A."/>
            <person name="Gocayne J.D."/>
            <person name="Scott J.D."/>
            <person name="Shirley R."/>
            <person name="Liu L.-I."/>
            <person name="Glodek A."/>
            <person name="Kelley J.M."/>
            <person name="Weidman J.F."/>
            <person name="Phillips C.A."/>
            <person name="Spriggs T."/>
            <person name="Hedblom E."/>
            <person name="Cotton M.D."/>
            <person name="Utterback T.R."/>
            <person name="Hanna M.C."/>
            <person name="Nguyen D.T."/>
            <person name="Saudek D.M."/>
            <person name="Brandon R.C."/>
            <person name="Fine L.D."/>
            <person name="Fritchman J.L."/>
            <person name="Fuhrmann J.L."/>
            <person name="Geoghagen N.S.M."/>
            <person name="Gnehm C.L."/>
            <person name="McDonald L.A."/>
            <person name="Small K.V."/>
            <person name="Fraser C.M."/>
            <person name="Smith H.O."/>
            <person name="Venter J.C."/>
        </authorList>
    </citation>
    <scope>NUCLEOTIDE SEQUENCE [LARGE SCALE GENOMIC DNA]</scope>
    <source>
        <strain>ATCC 51907 / DSM 11121 / KW20 / Rd</strain>
    </source>
</reference>
<proteinExistence type="inferred from homology"/>
<organism>
    <name type="scientific">Haemophilus influenzae (strain ATCC 51907 / DSM 11121 / KW20 / Rd)</name>
    <dbReference type="NCBI Taxonomy" id="71421"/>
    <lineage>
        <taxon>Bacteria</taxon>
        <taxon>Pseudomonadati</taxon>
        <taxon>Pseudomonadota</taxon>
        <taxon>Gammaproteobacteria</taxon>
        <taxon>Pasteurellales</taxon>
        <taxon>Pasteurellaceae</taxon>
        <taxon>Haemophilus</taxon>
    </lineage>
</organism>
<gene>
    <name evidence="1" type="primary">recD</name>
    <name type="ordered locus">HI_1322</name>
</gene>
<feature type="chain" id="PRO_0000087116" description="RecBCD enzyme subunit RecD">
    <location>
        <begin position="1"/>
        <end position="640"/>
    </location>
</feature>
<feature type="binding site" evidence="1">
    <location>
        <begin position="194"/>
        <end position="201"/>
    </location>
    <ligand>
        <name>ATP</name>
        <dbReference type="ChEBI" id="CHEBI:30616"/>
    </ligand>
</feature>
<name>RECD_HAEIN</name>
<dbReference type="EC" id="5.6.2.3" evidence="1"/>
<dbReference type="EMBL" id="L42023">
    <property type="protein sequence ID" value="AAC22967.1"/>
    <property type="molecule type" value="Genomic_DNA"/>
</dbReference>
<dbReference type="PIR" id="E64116">
    <property type="entry name" value="E64116"/>
</dbReference>
<dbReference type="RefSeq" id="NP_439473.1">
    <property type="nucleotide sequence ID" value="NC_000907.1"/>
</dbReference>
<dbReference type="SMR" id="P45158"/>
<dbReference type="STRING" id="71421.HI_1322"/>
<dbReference type="EnsemblBacteria" id="AAC22967">
    <property type="protein sequence ID" value="AAC22967"/>
    <property type="gene ID" value="HI_1322"/>
</dbReference>
<dbReference type="KEGG" id="hin:HI_1322"/>
<dbReference type="PATRIC" id="fig|71421.8.peg.1374"/>
<dbReference type="eggNOG" id="COG0507">
    <property type="taxonomic scope" value="Bacteria"/>
</dbReference>
<dbReference type="HOGENOM" id="CLU_007524_1_2_6"/>
<dbReference type="OrthoDB" id="9803432at2"/>
<dbReference type="PhylomeDB" id="P45158"/>
<dbReference type="BioCyc" id="HINF71421:G1GJ1-1347-MONOMER"/>
<dbReference type="Proteomes" id="UP000000579">
    <property type="component" value="Chromosome"/>
</dbReference>
<dbReference type="GO" id="GO:0009338">
    <property type="term" value="C:exodeoxyribonuclease V complex"/>
    <property type="evidence" value="ECO:0007669"/>
    <property type="project" value="InterPro"/>
</dbReference>
<dbReference type="GO" id="GO:0043139">
    <property type="term" value="F:5'-3' DNA helicase activity"/>
    <property type="evidence" value="ECO:0007669"/>
    <property type="project" value="UniProtKB-UniRule"/>
</dbReference>
<dbReference type="GO" id="GO:0005524">
    <property type="term" value="F:ATP binding"/>
    <property type="evidence" value="ECO:0007669"/>
    <property type="project" value="UniProtKB-UniRule"/>
</dbReference>
<dbReference type="GO" id="GO:0016887">
    <property type="term" value="F:ATP hydrolysis activity"/>
    <property type="evidence" value="ECO:0007669"/>
    <property type="project" value="RHEA"/>
</dbReference>
<dbReference type="GO" id="GO:0003677">
    <property type="term" value="F:DNA binding"/>
    <property type="evidence" value="ECO:0007669"/>
    <property type="project" value="UniProtKB-UniRule"/>
</dbReference>
<dbReference type="GO" id="GO:0008854">
    <property type="term" value="F:exodeoxyribonuclease V activity"/>
    <property type="evidence" value="ECO:0007669"/>
    <property type="project" value="UniProtKB-EC"/>
</dbReference>
<dbReference type="GO" id="GO:0000724">
    <property type="term" value="P:double-strand break repair via homologous recombination"/>
    <property type="evidence" value="ECO:0007669"/>
    <property type="project" value="UniProtKB-UniRule"/>
</dbReference>
<dbReference type="CDD" id="cd17933">
    <property type="entry name" value="DEXSc_RecD-like"/>
    <property type="match status" value="1"/>
</dbReference>
<dbReference type="CDD" id="cd18809">
    <property type="entry name" value="SF1_C_RecD"/>
    <property type="match status" value="1"/>
</dbReference>
<dbReference type="FunFam" id="3.40.50.300:FF:000912">
    <property type="entry name" value="RecBCD enzyme subunit RecD"/>
    <property type="match status" value="1"/>
</dbReference>
<dbReference type="Gene3D" id="3.40.50.300">
    <property type="entry name" value="P-loop containing nucleotide triphosphate hydrolases"/>
    <property type="match status" value="3"/>
</dbReference>
<dbReference type="Gene3D" id="1.10.10.1020">
    <property type="entry name" value="RecBCD complex, subunit RecD, N-terminal domain"/>
    <property type="match status" value="1"/>
</dbReference>
<dbReference type="HAMAP" id="MF_01487">
    <property type="entry name" value="RecD"/>
    <property type="match status" value="1"/>
</dbReference>
<dbReference type="InterPro" id="IPR050534">
    <property type="entry name" value="Coronavir_polyprotein_1ab"/>
</dbReference>
<dbReference type="InterPro" id="IPR027417">
    <property type="entry name" value="P-loop_NTPase"/>
</dbReference>
<dbReference type="InterPro" id="IPR006344">
    <property type="entry name" value="RecD"/>
</dbReference>
<dbReference type="InterPro" id="IPR049550">
    <property type="entry name" value="RecD_N"/>
</dbReference>
<dbReference type="InterPro" id="IPR041851">
    <property type="entry name" value="RecD_N_sf"/>
</dbReference>
<dbReference type="InterPro" id="IPR027785">
    <property type="entry name" value="UvrD-like_helicase_C"/>
</dbReference>
<dbReference type="NCBIfam" id="TIGR01447">
    <property type="entry name" value="recD"/>
    <property type="match status" value="1"/>
</dbReference>
<dbReference type="PANTHER" id="PTHR43788:SF6">
    <property type="entry name" value="DNA HELICASE B"/>
    <property type="match status" value="1"/>
</dbReference>
<dbReference type="PANTHER" id="PTHR43788">
    <property type="entry name" value="DNA2/NAM7 HELICASE FAMILY MEMBER"/>
    <property type="match status" value="1"/>
</dbReference>
<dbReference type="Pfam" id="PF13245">
    <property type="entry name" value="AAA_19"/>
    <property type="match status" value="1"/>
</dbReference>
<dbReference type="Pfam" id="PF21185">
    <property type="entry name" value="RecD_N"/>
    <property type="match status" value="1"/>
</dbReference>
<dbReference type="Pfam" id="PF13538">
    <property type="entry name" value="UvrD_C_2"/>
    <property type="match status" value="1"/>
</dbReference>
<dbReference type="SUPFAM" id="SSF52540">
    <property type="entry name" value="P-loop containing nucleoside triphosphate hydrolases"/>
    <property type="match status" value="2"/>
</dbReference>
<sequence length="640" mass="72864">MLSVLHKLKELRILSQGDYYFAKLIADKQCHTDYAEPVKNLAILLAALCSWRYTQGNTCSQLDRYLEHNLFGLAYRTTEEDYLAEIHEKIGYLPVEDWQNALCGHMAFTQDPVNQIAPMAFQFGALYFYRAWQDEYRIVQYIKNTLKKYRTLAFSYDEIHQKLEKYFPEKQEKTDWQKVAVATAIKSPFSIITGGPGTGKTTTVTRLLLVLQELFDCKLHIKLVAPTGKAASRLEESIKNALGFMQEKMNVSHSLFNAIPQKASTLHSLLGVNAFNDYTRYNSHNPLQLDVLVVDETSMIDLPMMAKLINALKPETRLILLGDQAQLASVEAGAVLGELAQFVTQPYSHEQAAYLLATTGYKVEGSDCSNPIRDCLCHLTESRRFDKDSGIGKLSEFIQKGKADDSLELFDHYPQELHFNSLNDEGDAVNQVVKSAVENYRTFLKMLDDLRKQKIDPNAKNEQGISYAEAIQVQFNSVRFLTALRNNNLGVENLNKEIALALREQKLLWFRNEQDWYIGKPIMITENDHNVRLYNGDIGLCLANGKVWFGNREVLTNRIPAHEPAFMMTIHKSQGSEFKHTVMVLPTEVNPVLSRELVFTGVTRAKKELTVFADEKIWKTAIRQTVKRQSGLGKLLEDLN</sequence>
<accession>P45158</accession>
<protein>
    <recommendedName>
        <fullName evidence="1">RecBCD enzyme subunit RecD</fullName>
        <ecNumber evidence="1">5.6.2.3</ecNumber>
    </recommendedName>
    <alternativeName>
        <fullName evidence="1">DNA 5'-3' helicase subunit RecB</fullName>
    </alternativeName>
    <alternativeName>
        <fullName evidence="1">Exonuclease V subunit RecD</fullName>
        <shortName evidence="1">ExoV subunit RecD</shortName>
    </alternativeName>
    <alternativeName>
        <fullName evidence="1">Helicase/nuclease RecBCD subunit RecD</fullName>
    </alternativeName>
</protein>
<keyword id="KW-0067">ATP-binding</keyword>
<keyword id="KW-0227">DNA damage</keyword>
<keyword id="KW-0234">DNA repair</keyword>
<keyword id="KW-0238">DNA-binding</keyword>
<keyword id="KW-0269">Exonuclease</keyword>
<keyword id="KW-0347">Helicase</keyword>
<keyword id="KW-0378">Hydrolase</keyword>
<keyword id="KW-0413">Isomerase</keyword>
<keyword id="KW-0540">Nuclease</keyword>
<keyword id="KW-0547">Nucleotide-binding</keyword>
<keyword id="KW-1185">Reference proteome</keyword>